<reference key="1">
    <citation type="journal article" date="2008" name="J. Bacteriol.">
        <title>Insights into the environmental resistance gene pool from the genome sequence of the multidrug-resistant environmental isolate Escherichia coli SMS-3-5.</title>
        <authorList>
            <person name="Fricke W.F."/>
            <person name="Wright M.S."/>
            <person name="Lindell A.H."/>
            <person name="Harkins D.M."/>
            <person name="Baker-Austin C."/>
            <person name="Ravel J."/>
            <person name="Stepanauskas R."/>
        </authorList>
    </citation>
    <scope>NUCLEOTIDE SEQUENCE [LARGE SCALE GENOMIC DNA]</scope>
    <source>
        <strain>SMS-3-5 / SECEC</strain>
    </source>
</reference>
<sequence length="183" mass="20999">MKKKTTLSEEDQALFRQLMAGTRKIKQDTIVHRPQRKKISEVPVKRLIQEQADASHYFSDEFQPLLNTEGPVKYVRPDVSHFEAKKLRRGDYSPELFLDLHGLTQLQAKQELGALIAACRREHVFCACVMHGHGKHILKQQTPLWLAQHPHVMAFHQAPKEYGGDAALLVLIEVDEWLPPELP</sequence>
<name>SMRB_ECOSM</name>
<accession>B1LLT7</accession>
<comment type="function">
    <text evidence="1">Acts as a ribosome collision sensor. Detects stalled/collided disomes (pairs of ribosomes where the leading ribosome is stalled and a second ribosome has collided with it) and endonucleolytically cleaves mRNA at the 5' boundary of the stalled ribosome. Stalled/collided disomes form a new interface (primarily via the 30S subunits) that binds SmrB. Cleaved mRNA becomes available for tmRNA ligation, leading to ribosomal subunit dissociation and rescue of stalled ribosomes.</text>
</comment>
<comment type="subunit">
    <text evidence="1">Associates with collided ribosomes, but not with correctly translating polysomes.</text>
</comment>
<comment type="similarity">
    <text evidence="1">Belongs to the SmrB family.</text>
</comment>
<feature type="chain" id="PRO_1000136042" description="Ribosome rescue factor SmrB">
    <location>
        <begin position="1"/>
        <end position="183"/>
    </location>
</feature>
<feature type="domain" description="Smr" evidence="1">
    <location>
        <begin position="98"/>
        <end position="173"/>
    </location>
</feature>
<organism>
    <name type="scientific">Escherichia coli (strain SMS-3-5 / SECEC)</name>
    <dbReference type="NCBI Taxonomy" id="439855"/>
    <lineage>
        <taxon>Bacteria</taxon>
        <taxon>Pseudomonadati</taxon>
        <taxon>Pseudomonadota</taxon>
        <taxon>Gammaproteobacteria</taxon>
        <taxon>Enterobacterales</taxon>
        <taxon>Enterobacteriaceae</taxon>
        <taxon>Escherichia</taxon>
    </lineage>
</organism>
<protein>
    <recommendedName>
        <fullName evidence="1">Ribosome rescue factor SmrB</fullName>
        <ecNumber evidence="1">3.1.-.-</ecNumber>
    </recommendedName>
</protein>
<proteinExistence type="inferred from homology"/>
<dbReference type="EC" id="3.1.-.-" evidence="1"/>
<dbReference type="EMBL" id="CP000970">
    <property type="protein sequence ID" value="ACB18778.1"/>
    <property type="molecule type" value="Genomic_DNA"/>
</dbReference>
<dbReference type="RefSeq" id="WP_000730805.1">
    <property type="nucleotide sequence ID" value="NC_010498.1"/>
</dbReference>
<dbReference type="SMR" id="B1LLT7"/>
<dbReference type="KEGG" id="ecm:EcSMS35_2488"/>
<dbReference type="HOGENOM" id="CLU_055978_4_0_6"/>
<dbReference type="Proteomes" id="UP000007011">
    <property type="component" value="Chromosome"/>
</dbReference>
<dbReference type="GO" id="GO:0004521">
    <property type="term" value="F:RNA endonuclease activity"/>
    <property type="evidence" value="ECO:0007669"/>
    <property type="project" value="UniProtKB-UniRule"/>
</dbReference>
<dbReference type="GO" id="GO:0019843">
    <property type="term" value="F:rRNA binding"/>
    <property type="evidence" value="ECO:0007669"/>
    <property type="project" value="UniProtKB-UniRule"/>
</dbReference>
<dbReference type="GO" id="GO:0072344">
    <property type="term" value="P:rescue of stalled ribosome"/>
    <property type="evidence" value="ECO:0007669"/>
    <property type="project" value="UniProtKB-UniRule"/>
</dbReference>
<dbReference type="Gene3D" id="3.30.1370.110">
    <property type="match status" value="1"/>
</dbReference>
<dbReference type="HAMAP" id="MF_01042">
    <property type="entry name" value="SmrB"/>
    <property type="match status" value="1"/>
</dbReference>
<dbReference type="InterPro" id="IPR002625">
    <property type="entry name" value="Smr_dom"/>
</dbReference>
<dbReference type="InterPro" id="IPR036063">
    <property type="entry name" value="Smr_dom_sf"/>
</dbReference>
<dbReference type="InterPro" id="IPR022990">
    <property type="entry name" value="SmrB-like"/>
</dbReference>
<dbReference type="NCBIfam" id="NF003432">
    <property type="entry name" value="PRK04946.1"/>
    <property type="match status" value="1"/>
</dbReference>
<dbReference type="PANTHER" id="PTHR35562">
    <property type="entry name" value="DNA ENDONUCLEASE SMRA-RELATED"/>
    <property type="match status" value="1"/>
</dbReference>
<dbReference type="PANTHER" id="PTHR35562:SF1">
    <property type="entry name" value="UPF0115 PROTEIN YFCN"/>
    <property type="match status" value="1"/>
</dbReference>
<dbReference type="Pfam" id="PF01713">
    <property type="entry name" value="Smr"/>
    <property type="match status" value="1"/>
</dbReference>
<dbReference type="SMART" id="SM00463">
    <property type="entry name" value="SMR"/>
    <property type="match status" value="1"/>
</dbReference>
<dbReference type="SUPFAM" id="SSF160443">
    <property type="entry name" value="SMR domain-like"/>
    <property type="match status" value="1"/>
</dbReference>
<dbReference type="PROSITE" id="PS50828">
    <property type="entry name" value="SMR"/>
    <property type="match status" value="1"/>
</dbReference>
<gene>
    <name evidence="1" type="primary">smrB</name>
    <name type="ordered locus">EcSMS35_2488</name>
</gene>
<keyword id="KW-0255">Endonuclease</keyword>
<keyword id="KW-0378">Hydrolase</keyword>
<keyword id="KW-0540">Nuclease</keyword>
<keyword id="KW-0694">RNA-binding</keyword>
<keyword id="KW-0699">rRNA-binding</keyword>
<evidence type="ECO:0000255" key="1">
    <source>
        <dbReference type="HAMAP-Rule" id="MF_01042"/>
    </source>
</evidence>